<accession>Q90891</accession>
<organism>
    <name type="scientific">Gallus gallus</name>
    <name type="common">Chicken</name>
    <dbReference type="NCBI Taxonomy" id="9031"/>
    <lineage>
        <taxon>Eukaryota</taxon>
        <taxon>Metazoa</taxon>
        <taxon>Chordata</taxon>
        <taxon>Craniata</taxon>
        <taxon>Vertebrata</taxon>
        <taxon>Euteleostomi</taxon>
        <taxon>Archelosauria</taxon>
        <taxon>Archosauria</taxon>
        <taxon>Dinosauria</taxon>
        <taxon>Saurischia</taxon>
        <taxon>Theropoda</taxon>
        <taxon>Coelurosauria</taxon>
        <taxon>Aves</taxon>
        <taxon>Neognathae</taxon>
        <taxon>Galloanserae</taxon>
        <taxon>Galliformes</taxon>
        <taxon>Phasianidae</taxon>
        <taxon>Phasianinae</taxon>
        <taxon>Gallus</taxon>
    </lineage>
</organism>
<gene>
    <name type="primary">MAP2K2</name>
    <name type="synonym">MEK2</name>
    <name type="synonym">MKK2</name>
    <name type="synonym">PRKMK2</name>
</gene>
<name>MP2K2_CHICK</name>
<dbReference type="EC" id="2.7.12.2"/>
<dbReference type="EMBL" id="L28703">
    <property type="protein sequence ID" value="AAA75576.1"/>
    <property type="molecule type" value="mRNA"/>
</dbReference>
<dbReference type="RefSeq" id="NP_990719.1">
    <property type="nucleotide sequence ID" value="NM_205388.1"/>
</dbReference>
<dbReference type="SMR" id="Q90891"/>
<dbReference type="BioGRID" id="676605">
    <property type="interactions" value="1"/>
</dbReference>
<dbReference type="FunCoup" id="Q90891">
    <property type="interactions" value="3326"/>
</dbReference>
<dbReference type="STRING" id="9031.ENSGALP00000001932"/>
<dbReference type="iPTMnet" id="Q90891"/>
<dbReference type="PaxDb" id="9031-ENSGALP00000001932"/>
<dbReference type="GeneID" id="396349"/>
<dbReference type="KEGG" id="gga:396349"/>
<dbReference type="CTD" id="5605"/>
<dbReference type="VEuPathDB" id="HostDB:geneid_396349"/>
<dbReference type="eggNOG" id="KOG0581">
    <property type="taxonomic scope" value="Eukaryota"/>
</dbReference>
<dbReference type="InParanoid" id="Q90891"/>
<dbReference type="OrthoDB" id="10252354at2759"/>
<dbReference type="PhylomeDB" id="Q90891"/>
<dbReference type="BRENDA" id="2.7.12.2">
    <property type="organism ID" value="1306"/>
</dbReference>
<dbReference type="Reactome" id="R-GGA-451478">
    <property type="pathway name" value="ERK activation"/>
</dbReference>
<dbReference type="PRO" id="PR:Q90891"/>
<dbReference type="Proteomes" id="UP000000539">
    <property type="component" value="Unassembled WGS sequence"/>
</dbReference>
<dbReference type="GO" id="GO:0005769">
    <property type="term" value="C:early endosome"/>
    <property type="evidence" value="ECO:0007669"/>
    <property type="project" value="UniProtKB-ARBA"/>
</dbReference>
<dbReference type="GO" id="GO:0005925">
    <property type="term" value="C:focal adhesion"/>
    <property type="evidence" value="ECO:0007669"/>
    <property type="project" value="UniProtKB-ARBA"/>
</dbReference>
<dbReference type="GO" id="GO:0005770">
    <property type="term" value="C:late endosome"/>
    <property type="evidence" value="ECO:0007669"/>
    <property type="project" value="UniProtKB-ARBA"/>
</dbReference>
<dbReference type="GO" id="GO:0005739">
    <property type="term" value="C:mitochondrion"/>
    <property type="evidence" value="ECO:0007669"/>
    <property type="project" value="UniProtKB-ARBA"/>
</dbReference>
<dbReference type="GO" id="GO:0005524">
    <property type="term" value="F:ATP binding"/>
    <property type="evidence" value="ECO:0007669"/>
    <property type="project" value="UniProtKB-KW"/>
</dbReference>
<dbReference type="GO" id="GO:0004708">
    <property type="term" value="F:MAP kinase kinase activity"/>
    <property type="evidence" value="ECO:0000318"/>
    <property type="project" value="GO_Central"/>
</dbReference>
<dbReference type="GO" id="GO:0106310">
    <property type="term" value="F:protein serine kinase activity"/>
    <property type="evidence" value="ECO:0007669"/>
    <property type="project" value="RHEA"/>
</dbReference>
<dbReference type="GO" id="GO:0004674">
    <property type="term" value="F:protein serine/threonine kinase activity"/>
    <property type="evidence" value="ECO:0007669"/>
    <property type="project" value="UniProtKB-KW"/>
</dbReference>
<dbReference type="GO" id="GO:0004713">
    <property type="term" value="F:protein tyrosine kinase activity"/>
    <property type="evidence" value="ECO:0007669"/>
    <property type="project" value="UniProtKB-KW"/>
</dbReference>
<dbReference type="GO" id="GO:0000165">
    <property type="term" value="P:MAPK cascade"/>
    <property type="evidence" value="ECO:0000318"/>
    <property type="project" value="GO_Central"/>
</dbReference>
<dbReference type="GO" id="GO:2000641">
    <property type="term" value="P:regulation of early endosome to late endosome transport"/>
    <property type="evidence" value="ECO:0007669"/>
    <property type="project" value="UniProtKB-ARBA"/>
</dbReference>
<dbReference type="GO" id="GO:0090170">
    <property type="term" value="P:regulation of Golgi inheritance"/>
    <property type="evidence" value="ECO:0007669"/>
    <property type="project" value="UniProtKB-ARBA"/>
</dbReference>
<dbReference type="GO" id="GO:0032872">
    <property type="term" value="P:regulation of stress-activated MAPK cascade"/>
    <property type="evidence" value="ECO:0007669"/>
    <property type="project" value="UniProtKB-ARBA"/>
</dbReference>
<dbReference type="CDD" id="cd06649">
    <property type="entry name" value="PKc_MEK2"/>
    <property type="match status" value="1"/>
</dbReference>
<dbReference type="FunFam" id="1.10.510.10:FF:000115">
    <property type="entry name" value="Dual specificity mitogen-activated protein kinase kinase 1"/>
    <property type="match status" value="1"/>
</dbReference>
<dbReference type="FunFam" id="3.30.200.20:FF:000100">
    <property type="entry name" value="Dual specificity mitogen-activated protein kinase kinase 1"/>
    <property type="match status" value="1"/>
</dbReference>
<dbReference type="Gene3D" id="3.30.200.20">
    <property type="entry name" value="Phosphorylase Kinase, domain 1"/>
    <property type="match status" value="1"/>
</dbReference>
<dbReference type="Gene3D" id="1.10.510.10">
    <property type="entry name" value="Transferase(Phosphotransferase) domain 1"/>
    <property type="match status" value="1"/>
</dbReference>
<dbReference type="InterPro" id="IPR011009">
    <property type="entry name" value="Kinase-like_dom_sf"/>
</dbReference>
<dbReference type="InterPro" id="IPR050915">
    <property type="entry name" value="MAP_kinase_kinase"/>
</dbReference>
<dbReference type="InterPro" id="IPR000719">
    <property type="entry name" value="Prot_kinase_dom"/>
</dbReference>
<dbReference type="InterPro" id="IPR017441">
    <property type="entry name" value="Protein_kinase_ATP_BS"/>
</dbReference>
<dbReference type="InterPro" id="IPR008271">
    <property type="entry name" value="Ser/Thr_kinase_AS"/>
</dbReference>
<dbReference type="PANTHER" id="PTHR47448">
    <property type="entry name" value="DUAL SPECIFICITY MITOGEN-ACTIVATED PROTEIN KINASE KINASE DSOR1-LIKE PROTEIN"/>
    <property type="match status" value="1"/>
</dbReference>
<dbReference type="PANTHER" id="PTHR47448:SF3">
    <property type="entry name" value="MITOGEN-ACTIVATED PROTEIN KINASE KINASE 2"/>
    <property type="match status" value="1"/>
</dbReference>
<dbReference type="Pfam" id="PF00069">
    <property type="entry name" value="Pkinase"/>
    <property type="match status" value="1"/>
</dbReference>
<dbReference type="SMART" id="SM00220">
    <property type="entry name" value="S_TKc"/>
    <property type="match status" value="1"/>
</dbReference>
<dbReference type="SUPFAM" id="SSF56112">
    <property type="entry name" value="Protein kinase-like (PK-like)"/>
    <property type="match status" value="1"/>
</dbReference>
<dbReference type="PROSITE" id="PS00107">
    <property type="entry name" value="PROTEIN_KINASE_ATP"/>
    <property type="match status" value="1"/>
</dbReference>
<dbReference type="PROSITE" id="PS50011">
    <property type="entry name" value="PROTEIN_KINASE_DOM"/>
    <property type="match status" value="1"/>
</dbReference>
<dbReference type="PROSITE" id="PS00108">
    <property type="entry name" value="PROTEIN_KINASE_ST"/>
    <property type="match status" value="1"/>
</dbReference>
<reference key="1">
    <citation type="journal article" date="1997" name="Biochemistry">
        <title>Cloning and characterization of cDNAs encoding chicken mitogen-activated protein kinase kinase type 2, MEK2: downregulation of MEK2 in response to inhibition of mitochondrial DNA expression.</title>
        <authorList>
            <person name="Wang H."/>
            <person name="Meury L."/>
            <person name="Morais R."/>
        </authorList>
    </citation>
    <scope>NUCLEOTIDE SEQUENCE [MRNA]</scope>
    <source>
        <strain>White leghorn</strain>
        <tissue>Liver</tissue>
    </source>
</reference>
<comment type="function">
    <text evidence="1">Catalyzes the concomitant phosphorylation of a threonine and a tyrosine residue in a Thr-Glu-Tyr sequence located in MAP kinases. Activates the ERK1 and ERK2 MAP kinases (By similarity).</text>
</comment>
<comment type="catalytic activity">
    <reaction>
        <text>L-seryl-[protein] + ATP = O-phospho-L-seryl-[protein] + ADP + H(+)</text>
        <dbReference type="Rhea" id="RHEA:17989"/>
        <dbReference type="Rhea" id="RHEA-COMP:9863"/>
        <dbReference type="Rhea" id="RHEA-COMP:11604"/>
        <dbReference type="ChEBI" id="CHEBI:15378"/>
        <dbReference type="ChEBI" id="CHEBI:29999"/>
        <dbReference type="ChEBI" id="CHEBI:30616"/>
        <dbReference type="ChEBI" id="CHEBI:83421"/>
        <dbReference type="ChEBI" id="CHEBI:456216"/>
        <dbReference type="EC" id="2.7.12.2"/>
    </reaction>
</comment>
<comment type="catalytic activity">
    <reaction>
        <text>L-threonyl-[protein] + ATP = O-phospho-L-threonyl-[protein] + ADP + H(+)</text>
        <dbReference type="Rhea" id="RHEA:46608"/>
        <dbReference type="Rhea" id="RHEA-COMP:11060"/>
        <dbReference type="Rhea" id="RHEA-COMP:11605"/>
        <dbReference type="ChEBI" id="CHEBI:15378"/>
        <dbReference type="ChEBI" id="CHEBI:30013"/>
        <dbReference type="ChEBI" id="CHEBI:30616"/>
        <dbReference type="ChEBI" id="CHEBI:61977"/>
        <dbReference type="ChEBI" id="CHEBI:456216"/>
        <dbReference type="EC" id="2.7.12.2"/>
    </reaction>
</comment>
<comment type="catalytic activity">
    <reaction>
        <text>L-tyrosyl-[protein] + ATP = O-phospho-L-tyrosyl-[protein] + ADP + H(+)</text>
        <dbReference type="Rhea" id="RHEA:10596"/>
        <dbReference type="Rhea" id="RHEA-COMP:10136"/>
        <dbReference type="Rhea" id="RHEA-COMP:20101"/>
        <dbReference type="ChEBI" id="CHEBI:15378"/>
        <dbReference type="ChEBI" id="CHEBI:30616"/>
        <dbReference type="ChEBI" id="CHEBI:46858"/>
        <dbReference type="ChEBI" id="CHEBI:61978"/>
        <dbReference type="ChEBI" id="CHEBI:456216"/>
        <dbReference type="EC" id="2.7.12.2"/>
    </reaction>
</comment>
<comment type="PTM">
    <text evidence="1">Activated by phosphorylation on Ser/Thr catalyzed by MAP kinase kinase kinases (RAF).</text>
</comment>
<comment type="similarity">
    <text evidence="5">Belongs to the protein kinase superfamily. STE Ser/Thr protein kinase family. MAP kinase kinase subfamily.</text>
</comment>
<feature type="chain" id="PRO_0000086375" description="Dual specificity mitogen-activated protein kinase kinase 2">
    <location>
        <begin position="1"/>
        <end position="398"/>
    </location>
</feature>
<feature type="domain" description="Protein kinase" evidence="2">
    <location>
        <begin position="70"/>
        <end position="367"/>
    </location>
</feature>
<feature type="region of interest" description="Disordered" evidence="4">
    <location>
        <begin position="1"/>
        <end position="29"/>
    </location>
</feature>
<feature type="active site" description="Proton acceptor" evidence="2 3">
    <location>
        <position position="192"/>
    </location>
</feature>
<feature type="binding site" evidence="2">
    <location>
        <begin position="76"/>
        <end position="84"/>
    </location>
    <ligand>
        <name>ATP</name>
        <dbReference type="ChEBI" id="CHEBI:30616"/>
    </ligand>
</feature>
<feature type="binding site" evidence="2">
    <location>
        <position position="99"/>
    </location>
    <ligand>
        <name>ATP</name>
        <dbReference type="ChEBI" id="CHEBI:30616"/>
    </ligand>
</feature>
<feature type="modified residue" description="Phosphoserine; by RAF" evidence="1">
    <location>
        <position position="220"/>
    </location>
</feature>
<feature type="modified residue" description="Phosphoserine; by RAF" evidence="1">
    <location>
        <position position="224"/>
    </location>
</feature>
<keyword id="KW-0067">ATP-binding</keyword>
<keyword id="KW-0418">Kinase</keyword>
<keyword id="KW-0547">Nucleotide-binding</keyword>
<keyword id="KW-0597">Phosphoprotein</keyword>
<keyword id="KW-1185">Reference proteome</keyword>
<keyword id="KW-0723">Serine/threonine-protein kinase</keyword>
<keyword id="KW-0808">Transferase</keyword>
<keyword id="KW-0829">Tyrosine-protein kinase</keyword>
<evidence type="ECO:0000250" key="1"/>
<evidence type="ECO:0000255" key="2">
    <source>
        <dbReference type="PROSITE-ProRule" id="PRU00159"/>
    </source>
</evidence>
<evidence type="ECO:0000255" key="3">
    <source>
        <dbReference type="PROSITE-ProRule" id="PRU10027"/>
    </source>
</evidence>
<evidence type="ECO:0000256" key="4">
    <source>
        <dbReference type="SAM" id="MobiDB-lite"/>
    </source>
</evidence>
<evidence type="ECO:0000305" key="5"/>
<sequence length="398" mass="44078">MPAKRKPVLPALTITPSPAEGPGPGGSAEANLVDLQKKLEELELDEQQKKRLEAFLTQKAKVGELKDDDFERISELGAGNGGVVTKVQHKPSGLIMARKLIHLEIKPAIRNQIIRELQVLHECNSPYIVGFYGAFYSDGEISICMEHMDGGSLDQVLKEAKRIPEEILGKVSIAVLRGLAYLREKHQIMHRDVKPSNILVNSRGEIKLCDFGVSGQLIDSMANSFVGTRSYMSPERLQGTHYSVQSDIWSMGLSLVELSIGRYPIPPPDSKELEAIFGRPVVDGAEGESHSVSPWARPPGRPISGHGMDSRPAMAIFELLDYIVNEPPPKLPNGVFTQDFQEFVNKCLIKNPAERADLKMLMNHTFIKRSEVEEVDFAGWLCKTLRLNQPSTPTRAAV</sequence>
<protein>
    <recommendedName>
        <fullName>Dual specificity mitogen-activated protein kinase kinase 2</fullName>
        <shortName>MAP kinase kinase 2</shortName>
        <shortName>MAPKK 2</shortName>
        <ecNumber>2.7.12.2</ecNumber>
    </recommendedName>
    <alternativeName>
        <fullName>ERK activator kinase 2</fullName>
    </alternativeName>
    <alternativeName>
        <fullName>MAPK/ERK kinase 2</fullName>
        <shortName>MEK2</shortName>
    </alternativeName>
</protein>
<proteinExistence type="evidence at transcript level"/>